<keyword id="KW-0150">Chloroplast</keyword>
<keyword id="KW-0472">Membrane</keyword>
<keyword id="KW-0602">Photosynthesis</keyword>
<keyword id="KW-0604">Photosystem II</keyword>
<keyword id="KW-0934">Plastid</keyword>
<keyword id="KW-0674">Reaction center</keyword>
<keyword id="KW-0793">Thylakoid</keyword>
<keyword id="KW-0812">Transmembrane</keyword>
<keyword id="KW-1133">Transmembrane helix</keyword>
<proteinExistence type="inferred from homology"/>
<dbReference type="EMBL" id="EU254477">
    <property type="protein sequence ID" value="ABY79747.1"/>
    <property type="molecule type" value="Genomic_DNA"/>
</dbReference>
<dbReference type="RefSeq" id="YP_001936532.1">
    <property type="nucleotide sequence ID" value="NC_010776.1"/>
</dbReference>
<dbReference type="SMR" id="B2XWM0"/>
<dbReference type="GeneID" id="6335966"/>
<dbReference type="GO" id="GO:0009535">
    <property type="term" value="C:chloroplast thylakoid membrane"/>
    <property type="evidence" value="ECO:0007669"/>
    <property type="project" value="UniProtKB-SubCell"/>
</dbReference>
<dbReference type="GO" id="GO:0009539">
    <property type="term" value="C:photosystem II reaction center"/>
    <property type="evidence" value="ECO:0007669"/>
    <property type="project" value="InterPro"/>
</dbReference>
<dbReference type="GO" id="GO:0015979">
    <property type="term" value="P:photosynthesis"/>
    <property type="evidence" value="ECO:0007669"/>
    <property type="project" value="UniProtKB-UniRule"/>
</dbReference>
<dbReference type="HAMAP" id="MF_01317">
    <property type="entry name" value="PSII_PsbL"/>
    <property type="match status" value="1"/>
</dbReference>
<dbReference type="InterPro" id="IPR003372">
    <property type="entry name" value="PSII_PsbL"/>
</dbReference>
<dbReference type="InterPro" id="IPR037266">
    <property type="entry name" value="PSII_PsbL_sf"/>
</dbReference>
<dbReference type="NCBIfam" id="NF001972">
    <property type="entry name" value="PRK00753.1"/>
    <property type="match status" value="1"/>
</dbReference>
<dbReference type="Pfam" id="PF02419">
    <property type="entry name" value="PsbL"/>
    <property type="match status" value="1"/>
</dbReference>
<dbReference type="SUPFAM" id="SSF161017">
    <property type="entry name" value="Photosystem II reaction center protein L, PsbL"/>
    <property type="match status" value="1"/>
</dbReference>
<protein>
    <recommendedName>
        <fullName evidence="1">Photosystem II reaction center protein L</fullName>
        <shortName evidence="1">PSII-L</shortName>
    </recommendedName>
</protein>
<reference key="1">
    <citation type="journal article" date="2008" name="BMC Plant Biol.">
        <title>Comparative chloroplast genomics and phylogenetics of Fagopyrum esculentum ssp. ancestrale - a wild ancestor of cultivated buckwheat.</title>
        <authorList>
            <person name="Logacheva M.D."/>
            <person name="Samigullin T.H."/>
            <person name="Dhingra A."/>
            <person name="Penin A.A."/>
        </authorList>
    </citation>
    <scope>NUCLEOTIDE SEQUENCE [LARGE SCALE GENOMIC DNA]</scope>
</reference>
<evidence type="ECO:0000255" key="1">
    <source>
        <dbReference type="HAMAP-Rule" id="MF_01317"/>
    </source>
</evidence>
<comment type="function">
    <text evidence="1">One of the components of the core complex of photosystem II (PSII). PSII is a light-driven water:plastoquinone oxidoreductase that uses light energy to abstract electrons from H(2)O, generating O(2) and a proton gradient subsequently used for ATP formation. It consists of a core antenna complex that captures photons, and an electron transfer chain that converts photonic excitation into a charge separation. This subunit is found at the monomer-monomer interface and is required for correct PSII assembly and/or dimerization.</text>
</comment>
<comment type="subunit">
    <text evidence="1">PSII is composed of 1 copy each of membrane proteins PsbA, PsbB, PsbC, PsbD, PsbE, PsbF, PsbH, PsbI, PsbJ, PsbK, PsbL, PsbM, PsbT, PsbX, PsbY, PsbZ, Psb30/Ycf12, at least 3 peripheral proteins of the oxygen-evolving complex and a large number of cofactors. It forms dimeric complexes.</text>
</comment>
<comment type="subcellular location">
    <subcellularLocation>
        <location evidence="1">Plastid</location>
        <location evidence="1">Chloroplast thylakoid membrane</location>
        <topology evidence="1">Single-pass membrane protein</topology>
    </subcellularLocation>
</comment>
<comment type="similarity">
    <text evidence="1">Belongs to the PsbL family.</text>
</comment>
<accession>B2XWM0</accession>
<feature type="chain" id="PRO_0000353256" description="Photosystem II reaction center protein L">
    <location>
        <begin position="1"/>
        <end position="38"/>
    </location>
</feature>
<feature type="transmembrane region" description="Helical" evidence="1">
    <location>
        <begin position="17"/>
        <end position="37"/>
    </location>
</feature>
<organism>
    <name type="scientific">Fagopyrum esculentum subsp. ancestrale</name>
    <name type="common">Wild buckwheat</name>
    <dbReference type="NCBI Taxonomy" id="180217"/>
    <lineage>
        <taxon>Eukaryota</taxon>
        <taxon>Viridiplantae</taxon>
        <taxon>Streptophyta</taxon>
        <taxon>Embryophyta</taxon>
        <taxon>Tracheophyta</taxon>
        <taxon>Spermatophyta</taxon>
        <taxon>Magnoliopsida</taxon>
        <taxon>eudicotyledons</taxon>
        <taxon>Gunneridae</taxon>
        <taxon>Pentapetalae</taxon>
        <taxon>Caryophyllales</taxon>
        <taxon>Polygonaceae</taxon>
        <taxon>Polygonoideae</taxon>
        <taxon>Fagopyreae</taxon>
        <taxon>Fagopyrum</taxon>
    </lineage>
</organism>
<name>PSBL_FAGEA</name>
<gene>
    <name evidence="1" type="primary">psbL</name>
</gene>
<geneLocation type="chloroplast"/>
<sequence>MTQSNPNEQNVELNRTSLYWGLLLIFVLAVLFSNYFFN</sequence>